<dbReference type="EC" id="1.11.1.24" evidence="1"/>
<dbReference type="EMBL" id="AF110732">
    <property type="protein sequence ID" value="AAF03751.1"/>
    <property type="molecule type" value="mRNA"/>
</dbReference>
<dbReference type="EMBL" id="BC078771">
    <property type="protein sequence ID" value="AAH78771.1"/>
    <property type="molecule type" value="mRNA"/>
</dbReference>
<dbReference type="RefSeq" id="NP_446062.1">
    <property type="nucleotide sequence ID" value="NM_053610.1"/>
</dbReference>
<dbReference type="SMR" id="Q9R063"/>
<dbReference type="BioGRID" id="250207">
    <property type="interactions" value="2"/>
</dbReference>
<dbReference type="FunCoup" id="Q9R063">
    <property type="interactions" value="1580"/>
</dbReference>
<dbReference type="IntAct" id="Q9R063">
    <property type="interactions" value="3"/>
</dbReference>
<dbReference type="MINT" id="Q9R063"/>
<dbReference type="STRING" id="10116.ENSRNOP00000028687"/>
<dbReference type="PeroxiBase" id="4452">
    <property type="entry name" value="RnoPrxV"/>
</dbReference>
<dbReference type="iPTMnet" id="Q9R063"/>
<dbReference type="PhosphoSitePlus" id="Q9R063"/>
<dbReference type="SwissPalm" id="Q9R063"/>
<dbReference type="jPOST" id="Q9R063"/>
<dbReference type="PaxDb" id="10116-ENSRNOP00000028687"/>
<dbReference type="GeneID" id="113898"/>
<dbReference type="KEGG" id="rno:113898"/>
<dbReference type="UCSC" id="RGD:71007">
    <molecule id="Q9R063-1"/>
    <property type="organism name" value="rat"/>
</dbReference>
<dbReference type="AGR" id="RGD:71007"/>
<dbReference type="CTD" id="25824"/>
<dbReference type="RGD" id="71007">
    <property type="gene designation" value="Prdx5"/>
</dbReference>
<dbReference type="eggNOG" id="KOG0541">
    <property type="taxonomic scope" value="Eukaryota"/>
</dbReference>
<dbReference type="InParanoid" id="Q9R063"/>
<dbReference type="OrthoDB" id="30900at9989"/>
<dbReference type="PhylomeDB" id="Q9R063"/>
<dbReference type="TreeFam" id="TF105182"/>
<dbReference type="Reactome" id="R-RNO-3299685">
    <property type="pathway name" value="Detoxification of Reactive Oxygen Species"/>
</dbReference>
<dbReference type="Reactome" id="R-RNO-5628897">
    <property type="pathway name" value="TP53 Regulates Metabolic Genes"/>
</dbReference>
<dbReference type="PRO" id="PR:Q9R063"/>
<dbReference type="Proteomes" id="UP000002494">
    <property type="component" value="Unplaced"/>
</dbReference>
<dbReference type="GO" id="GO:0005737">
    <property type="term" value="C:cytoplasm"/>
    <property type="evidence" value="ECO:0000266"/>
    <property type="project" value="RGD"/>
</dbReference>
<dbReference type="GO" id="GO:0031410">
    <property type="term" value="C:cytoplasmic vesicle"/>
    <property type="evidence" value="ECO:0000266"/>
    <property type="project" value="RGD"/>
</dbReference>
<dbReference type="GO" id="GO:0005829">
    <property type="term" value="C:cytosol"/>
    <property type="evidence" value="ECO:0000266"/>
    <property type="project" value="RGD"/>
</dbReference>
<dbReference type="GO" id="GO:0043231">
    <property type="term" value="C:intracellular membrane-bounded organelle"/>
    <property type="evidence" value="ECO:0000266"/>
    <property type="project" value="RGD"/>
</dbReference>
<dbReference type="GO" id="GO:0005739">
    <property type="term" value="C:mitochondrion"/>
    <property type="evidence" value="ECO:0000314"/>
    <property type="project" value="HGNC-UCL"/>
</dbReference>
<dbReference type="GO" id="GO:0005634">
    <property type="term" value="C:nucleus"/>
    <property type="evidence" value="ECO:0000266"/>
    <property type="project" value="RGD"/>
</dbReference>
<dbReference type="GO" id="GO:0048471">
    <property type="term" value="C:perinuclear region of cytoplasm"/>
    <property type="evidence" value="ECO:0000266"/>
    <property type="project" value="RGD"/>
</dbReference>
<dbReference type="GO" id="GO:0005782">
    <property type="term" value="C:peroxisomal matrix"/>
    <property type="evidence" value="ECO:0007669"/>
    <property type="project" value="UniProtKB-SubCell"/>
</dbReference>
<dbReference type="GO" id="GO:0005777">
    <property type="term" value="C:peroxisome"/>
    <property type="evidence" value="ECO:0000314"/>
    <property type="project" value="HGNC-UCL"/>
</dbReference>
<dbReference type="GO" id="GO:0043027">
    <property type="term" value="F:cysteine-type endopeptidase inhibitor activity involved in apoptotic process"/>
    <property type="evidence" value="ECO:0000266"/>
    <property type="project" value="RGD"/>
</dbReference>
<dbReference type="GO" id="GO:0004601">
    <property type="term" value="F:peroxidase activity"/>
    <property type="evidence" value="ECO:0000266"/>
    <property type="project" value="RGD"/>
</dbReference>
<dbReference type="GO" id="GO:0001016">
    <property type="term" value="F:RNA polymerase III transcription regulatory region sequence-specific DNA binding"/>
    <property type="evidence" value="ECO:0000266"/>
    <property type="project" value="RGD"/>
</dbReference>
<dbReference type="GO" id="GO:0008379">
    <property type="term" value="F:thioredoxin peroxidase activity"/>
    <property type="evidence" value="ECO:0000266"/>
    <property type="project" value="RGD"/>
</dbReference>
<dbReference type="GO" id="GO:0140824">
    <property type="term" value="F:thioredoxin-dependent peroxiredoxin activity"/>
    <property type="evidence" value="ECO:0000266"/>
    <property type="project" value="RGD"/>
</dbReference>
<dbReference type="GO" id="GO:0045454">
    <property type="term" value="P:cell redox homeostasis"/>
    <property type="evidence" value="ECO:0000318"/>
    <property type="project" value="GO_Central"/>
</dbReference>
<dbReference type="GO" id="GO:0034599">
    <property type="term" value="P:cellular response to oxidative stress"/>
    <property type="evidence" value="ECO:0000318"/>
    <property type="project" value="GO_Central"/>
</dbReference>
<dbReference type="GO" id="GO:0034614">
    <property type="term" value="P:cellular response to reactive oxygen species"/>
    <property type="evidence" value="ECO:0000266"/>
    <property type="project" value="RGD"/>
</dbReference>
<dbReference type="GO" id="GO:0042744">
    <property type="term" value="P:hydrogen peroxide catabolic process"/>
    <property type="evidence" value="ECO:0000318"/>
    <property type="project" value="GO_Central"/>
</dbReference>
<dbReference type="GO" id="GO:0043066">
    <property type="term" value="P:negative regulation of apoptotic process"/>
    <property type="evidence" value="ECO:0000266"/>
    <property type="project" value="RGD"/>
</dbReference>
<dbReference type="GO" id="GO:0016480">
    <property type="term" value="P:negative regulation of transcription by RNA polymerase III"/>
    <property type="evidence" value="ECO:0000266"/>
    <property type="project" value="RGD"/>
</dbReference>
<dbReference type="GO" id="GO:0006979">
    <property type="term" value="P:response to oxidative stress"/>
    <property type="evidence" value="ECO:0000266"/>
    <property type="project" value="RGD"/>
</dbReference>
<dbReference type="CDD" id="cd03013">
    <property type="entry name" value="PRX5_like"/>
    <property type="match status" value="1"/>
</dbReference>
<dbReference type="FunFam" id="3.40.30.10:FF:000020">
    <property type="entry name" value="Peroxiredoxin"/>
    <property type="match status" value="1"/>
</dbReference>
<dbReference type="Gene3D" id="3.40.30.10">
    <property type="entry name" value="Glutaredoxin"/>
    <property type="match status" value="1"/>
</dbReference>
<dbReference type="InterPro" id="IPR037944">
    <property type="entry name" value="PRX5-like"/>
</dbReference>
<dbReference type="InterPro" id="IPR013740">
    <property type="entry name" value="Redoxin"/>
</dbReference>
<dbReference type="InterPro" id="IPR036249">
    <property type="entry name" value="Thioredoxin-like_sf"/>
</dbReference>
<dbReference type="InterPro" id="IPR013766">
    <property type="entry name" value="Thioredoxin_domain"/>
</dbReference>
<dbReference type="PANTHER" id="PTHR10430">
    <property type="entry name" value="PEROXIREDOXIN"/>
    <property type="match status" value="1"/>
</dbReference>
<dbReference type="PANTHER" id="PTHR10430:SF16">
    <property type="entry name" value="PEROXIREDOXIN-5, MITOCHONDRIAL"/>
    <property type="match status" value="1"/>
</dbReference>
<dbReference type="Pfam" id="PF08534">
    <property type="entry name" value="Redoxin"/>
    <property type="match status" value="1"/>
</dbReference>
<dbReference type="SUPFAM" id="SSF52833">
    <property type="entry name" value="Thioredoxin-like"/>
    <property type="match status" value="1"/>
</dbReference>
<dbReference type="PROSITE" id="PS51352">
    <property type="entry name" value="THIOREDOXIN_2"/>
    <property type="match status" value="1"/>
</dbReference>
<organism>
    <name type="scientific">Rattus norvegicus</name>
    <name type="common">Rat</name>
    <dbReference type="NCBI Taxonomy" id="10116"/>
    <lineage>
        <taxon>Eukaryota</taxon>
        <taxon>Metazoa</taxon>
        <taxon>Chordata</taxon>
        <taxon>Craniata</taxon>
        <taxon>Vertebrata</taxon>
        <taxon>Euteleostomi</taxon>
        <taxon>Mammalia</taxon>
        <taxon>Eutheria</taxon>
        <taxon>Euarchontoglires</taxon>
        <taxon>Glires</taxon>
        <taxon>Rodentia</taxon>
        <taxon>Myomorpha</taxon>
        <taxon>Muroidea</taxon>
        <taxon>Muridae</taxon>
        <taxon>Murinae</taxon>
        <taxon>Rattus</taxon>
    </lineage>
</organism>
<name>PRDX5_RAT</name>
<reference key="1">
    <citation type="journal article" date="1999" name="J. Biol. Chem.">
        <title>Cloning and characterization of AOEB166, a novel mammalian antioxidant enzyme of the peroxiredoxin family.</title>
        <authorList>
            <person name="Knoops B."/>
            <person name="Clippe A."/>
            <person name="Bogard C."/>
            <person name="Arsalane K."/>
            <person name="Wattiez R."/>
            <person name="Hermans C."/>
            <person name="Duconseille E."/>
            <person name="Falmagne P."/>
            <person name="Bernard A."/>
        </authorList>
    </citation>
    <scope>NUCLEOTIDE SEQUENCE [MRNA]</scope>
    <scope>FUNCTION</scope>
    <source>
        <strain>Sprague-Dawley</strain>
        <tissue>Liver</tissue>
    </source>
</reference>
<reference key="2">
    <citation type="journal article" date="2004" name="Genome Res.">
        <title>The status, quality, and expansion of the NIH full-length cDNA project: the Mammalian Gene Collection (MGC).</title>
        <authorList>
            <consortium name="The MGC Project Team"/>
        </authorList>
    </citation>
    <scope>NUCLEOTIDE SEQUENCE [LARGE SCALE MRNA]</scope>
    <scope>VARIANT VAL-130</scope>
    <source>
        <tissue>Heart</tissue>
    </source>
</reference>
<reference key="3">
    <citation type="submission" date="2007-07" db="UniProtKB">
        <authorList>
            <person name="Lubec G."/>
            <person name="Afjehi-Sadat L."/>
            <person name="Kang S.U."/>
        </authorList>
    </citation>
    <scope>PROTEIN SEQUENCE OF 75-82; 86-115 AND 159-176</scope>
    <scope>IDENTIFICATION BY MASS SPECTROMETRY</scope>
    <source>
        <strain>Sprague-Dawley</strain>
        <tissue>Brain</tissue>
        <tissue>Spinal cord</tissue>
    </source>
</reference>
<reference key="4">
    <citation type="journal article" date="2012" name="Nat. Commun.">
        <title>Quantitative maps of protein phosphorylation sites across 14 different rat organs and tissues.</title>
        <authorList>
            <person name="Lundby A."/>
            <person name="Secher A."/>
            <person name="Lage K."/>
            <person name="Nordsborg N.B."/>
            <person name="Dmytriyev A."/>
            <person name="Lundby C."/>
            <person name="Olsen J.V."/>
        </authorList>
    </citation>
    <scope>PHOSPHORYLATION [LARGE SCALE ANALYSIS] AT SER-170</scope>
    <scope>IDENTIFICATION BY MASS SPECTROMETRY [LARGE SCALE ANALYSIS]</scope>
</reference>
<comment type="function">
    <text evidence="5">Thiol-specific peroxidase that catalyzes the reduction of hydrogen peroxide and organic hydroperoxides to water and alcohols, respectively. Plays a role in cell protection against oxidative stress by detoxifying peroxides and as sensor of hydrogen peroxide-mediated signaling events.</text>
</comment>
<comment type="catalytic activity">
    <reaction evidence="1">
        <text>a hydroperoxide + [thioredoxin]-dithiol = an alcohol + [thioredoxin]-disulfide + H2O</text>
        <dbReference type="Rhea" id="RHEA:62620"/>
        <dbReference type="Rhea" id="RHEA-COMP:10698"/>
        <dbReference type="Rhea" id="RHEA-COMP:10700"/>
        <dbReference type="ChEBI" id="CHEBI:15377"/>
        <dbReference type="ChEBI" id="CHEBI:29950"/>
        <dbReference type="ChEBI" id="CHEBI:30879"/>
        <dbReference type="ChEBI" id="CHEBI:35924"/>
        <dbReference type="ChEBI" id="CHEBI:50058"/>
        <dbReference type="EC" id="1.11.1.24"/>
    </reaction>
</comment>
<comment type="subunit">
    <text evidence="1">Monomer.</text>
</comment>
<comment type="subcellular location">
    <molecule>Isoform Mitochondrial</molecule>
    <subcellularLocation>
        <location evidence="1">Mitochondrion</location>
    </subcellularLocation>
</comment>
<comment type="subcellular location">
    <molecule>Isoform Cytoplasmic+peroxisomal</molecule>
    <subcellularLocation>
        <location evidence="1">Cytoplasm</location>
    </subcellularLocation>
    <subcellularLocation>
        <location evidence="1">Peroxisome matrix</location>
    </subcellularLocation>
</comment>
<comment type="alternative products">
    <event type="alternative initiation"/>
    <isoform>
        <id>Q9R063-1</id>
        <name>Mitochondrial</name>
        <sequence type="displayed"/>
    </isoform>
    <isoform>
        <id>Q9R063-2</id>
        <name>Cytoplasmic+peroxisomal</name>
        <sequence type="described" ref="VSP_018832"/>
    </isoform>
</comment>
<comment type="PTM">
    <text evidence="1">S-palmitoylated. Palmitoylation occurs on the active site, inhibiting its reactivity; therefore PRDX5 palmitoylation status determines its antioxidant capacity.</text>
</comment>
<comment type="PTM">
    <molecule>Isoform Mitochondrial</molecule>
    <text evidence="1">S-palmitoylated. Depalmitoylated by ABHD10.</text>
</comment>
<comment type="miscellaneous">
    <text evidence="1">The active site is a conserved redox-active cysteine residue, the peroxidatic cysteine (C(P)), which makes the nucleophilic attack on the peroxide substrate. The peroxide oxidizes the C(P)-SH to cysteine sulfenic acid (C(P)-SOH), which then reacts with another cysteine residue, the resolving cysteine (C(R)), to form a disulfide bridge. The disulfide is subsequently reduced by an appropriate electron donor to complete the catalytic cycle. In this atypical 2-Cys Prx, C(R) is present in the same subunit to form an intramolecular disulfide. The disulfide is subsequently reduced by thioredoxin.</text>
</comment>
<comment type="similarity">
    <text evidence="7">Belongs to the peroxiredoxin family. Prx5 subfamily.</text>
</comment>
<proteinExistence type="evidence at protein level"/>
<evidence type="ECO:0000250" key="1">
    <source>
        <dbReference type="UniProtKB" id="P30044"/>
    </source>
</evidence>
<evidence type="ECO:0000250" key="2">
    <source>
        <dbReference type="UniProtKB" id="P99029"/>
    </source>
</evidence>
<evidence type="ECO:0000255" key="3"/>
<evidence type="ECO:0000255" key="4">
    <source>
        <dbReference type="PROSITE-ProRule" id="PRU00691"/>
    </source>
</evidence>
<evidence type="ECO:0000269" key="5">
    <source>
    </source>
</evidence>
<evidence type="ECO:0000269" key="6">
    <source>
    </source>
</evidence>
<evidence type="ECO:0000305" key="7"/>
<evidence type="ECO:0000312" key="8">
    <source>
        <dbReference type="RGD" id="71007"/>
    </source>
</evidence>
<evidence type="ECO:0007744" key="9">
    <source>
    </source>
</evidence>
<protein>
    <recommendedName>
        <fullName>Peroxiredoxin-5, mitochondrial</fullName>
        <ecNumber evidence="1">1.11.1.24</ecNumber>
    </recommendedName>
    <alternativeName>
        <fullName>Antioxidant enzyme B166</fullName>
        <shortName>AOEB166</shortName>
    </alternativeName>
    <alternativeName>
        <fullName>PLP</fullName>
    </alternativeName>
    <alternativeName>
        <fullName>Peroxiredoxin V</fullName>
        <shortName>Prx-V</shortName>
    </alternativeName>
    <alternativeName>
        <fullName>Peroxisomal antioxidant enzyme</fullName>
    </alternativeName>
    <alternativeName>
        <fullName>Thioredoxin peroxidase PMP20</fullName>
    </alternativeName>
    <alternativeName>
        <fullName evidence="7">Thioredoxin-dependent peroxiredoxin 5</fullName>
    </alternativeName>
</protein>
<accession>Q9R063</accession>
<accession>Q68G22</accession>
<feature type="transit peptide" description="Mitochondrion" evidence="3">
    <location>
        <begin position="1"/>
        <end position="51"/>
    </location>
</feature>
<feature type="chain" id="PRO_0000023799" description="Peroxiredoxin-5, mitochondrial">
    <location>
        <begin position="52"/>
        <end position="213"/>
    </location>
</feature>
<feature type="domain" description="Thioredoxin" evidence="4">
    <location>
        <begin position="55"/>
        <end position="213"/>
    </location>
</feature>
<feature type="short sequence motif" description="Microbody targeting signal" evidence="1">
    <location>
        <begin position="211"/>
        <end position="213"/>
    </location>
</feature>
<feature type="active site" description="Cysteine sulfenic acid (-SOH) intermediate" evidence="1">
    <location>
        <position position="99"/>
    </location>
</feature>
<feature type="modified residue" description="N6-acetyllysine" evidence="2">
    <location>
        <position position="74"/>
    </location>
</feature>
<feature type="modified residue" description="N6-acetyllysine; alternate" evidence="1">
    <location>
        <position position="82"/>
    </location>
</feature>
<feature type="modified residue" description="N6-succinyllysine; alternate" evidence="2">
    <location>
        <position position="82"/>
    </location>
</feature>
<feature type="modified residue" description="N6-succinyllysine" evidence="2">
    <location>
        <position position="115"/>
    </location>
</feature>
<feature type="modified residue" description="Phosphoserine" evidence="9">
    <location>
        <position position="170"/>
    </location>
</feature>
<feature type="modified residue" description="Phosphoserine" evidence="2">
    <location>
        <position position="181"/>
    </location>
</feature>
<feature type="lipid moiety-binding region" description="S-palmitoyl cysteine" evidence="1">
    <location>
        <position position="99"/>
    </location>
</feature>
<feature type="disulfide bond" description="Redox-active" evidence="4">
    <location>
        <begin position="99"/>
        <end position="203"/>
    </location>
</feature>
<feature type="splice variant" id="VSP_018832" description="In isoform Cytoplasmic+peroxisomal." evidence="7">
    <location>
        <begin position="1"/>
        <end position="51"/>
    </location>
</feature>
<feature type="sequence variant">
    <original>E</original>
    <variation>G</variation>
    <location>
        <position position="68"/>
    </location>
</feature>
<feature type="sequence variant">
    <original>L</original>
    <variation>P</variation>
    <location>
        <position position="114"/>
    </location>
</feature>
<feature type="sequence variant" evidence="6">
    <original>A</original>
    <variation>V</variation>
    <location>
        <position position="130"/>
    </location>
</feature>
<gene>
    <name evidence="8" type="primary">Prdx5</name>
</gene>
<sequence length="213" mass="22179">MVQLRFCVLGSIAGSVLRASATWTCVAGRAGRKGAGWECGGARSFSSAAVTMAPIKVGDTIPSVEVFEGEPGKKVNLAELFKDKKGVLFGVPGAFTPGCSKTHLPGFVEQAGALKAKGAQVVACLSVNDAFVTAEWGRAHQAEGKVQLLADPTGAFGKETDLLLDDSLVSLFGNRRLKRFSMVIDKGVVKALNVEPDGTGLTCSLAPNILSQL</sequence>
<keyword id="KW-0007">Acetylation</keyword>
<keyword id="KW-0024">Alternative initiation</keyword>
<keyword id="KW-0049">Antioxidant</keyword>
<keyword id="KW-0963">Cytoplasm</keyword>
<keyword id="KW-0903">Direct protein sequencing</keyword>
<keyword id="KW-1015">Disulfide bond</keyword>
<keyword id="KW-0449">Lipoprotein</keyword>
<keyword id="KW-0496">Mitochondrion</keyword>
<keyword id="KW-0560">Oxidoreductase</keyword>
<keyword id="KW-0564">Palmitate</keyword>
<keyword id="KW-0575">Peroxidase</keyword>
<keyword id="KW-0576">Peroxisome</keyword>
<keyword id="KW-0597">Phosphoprotein</keyword>
<keyword id="KW-0676">Redox-active center</keyword>
<keyword id="KW-1185">Reference proteome</keyword>
<keyword id="KW-0809">Transit peptide</keyword>